<evidence type="ECO:0000255" key="1">
    <source>
        <dbReference type="HAMAP-Rule" id="MF_00176"/>
    </source>
</evidence>
<feature type="chain" id="PRO_1000019630" description="Serine--tRNA ligase">
    <location>
        <begin position="1"/>
        <end position="433"/>
    </location>
</feature>
<feature type="binding site" evidence="1">
    <location>
        <begin position="235"/>
        <end position="237"/>
    </location>
    <ligand>
        <name>L-serine</name>
        <dbReference type="ChEBI" id="CHEBI:33384"/>
    </ligand>
</feature>
<feature type="binding site" evidence="1">
    <location>
        <begin position="266"/>
        <end position="268"/>
    </location>
    <ligand>
        <name>ATP</name>
        <dbReference type="ChEBI" id="CHEBI:30616"/>
    </ligand>
</feature>
<feature type="binding site" evidence="1">
    <location>
        <position position="289"/>
    </location>
    <ligand>
        <name>L-serine</name>
        <dbReference type="ChEBI" id="CHEBI:33384"/>
    </ligand>
</feature>
<feature type="binding site" evidence="1">
    <location>
        <begin position="353"/>
        <end position="356"/>
    </location>
    <ligand>
        <name>ATP</name>
        <dbReference type="ChEBI" id="CHEBI:30616"/>
    </ligand>
</feature>
<feature type="binding site" evidence="1">
    <location>
        <position position="388"/>
    </location>
    <ligand>
        <name>L-serine</name>
        <dbReference type="ChEBI" id="CHEBI:33384"/>
    </ligand>
</feature>
<gene>
    <name evidence="1" type="primary">serS</name>
    <name type="ordered locus">BMA10229_A2626</name>
</gene>
<protein>
    <recommendedName>
        <fullName evidence="1">Serine--tRNA ligase</fullName>
        <ecNumber evidence="1">6.1.1.11</ecNumber>
    </recommendedName>
    <alternativeName>
        <fullName evidence="1">Seryl-tRNA synthetase</fullName>
        <shortName evidence="1">SerRS</shortName>
    </alternativeName>
    <alternativeName>
        <fullName evidence="1">Seryl-tRNA(Ser/Sec) synthetase</fullName>
    </alternativeName>
</protein>
<proteinExistence type="inferred from homology"/>
<sequence>MLDIQLLRKDLDGVAKRLADRGYPLDVAAFSALEAERRAIQTRTEELQARRNSLSKQIGAMKGRGEDTSAVMAEVGGIGDEMKASAVKLDEIQARLSELMLEMPNVPHESVPVGRDETENVEVRRWGAPRQFDFDVKDHVDVGTPLGLDFETGAKLSGARFTVLRGPIARLHRALAQFMLDTHTQQHGYSETYTPYIVNPDVLYGTGQLPKFAEDMFRVEKGGAENTVTQYLISTSEISLTNTVRDSIVEASALPIKLTAHSPCFRSEAGSYGRDTRGMIRQHQFDKVEMVQIVAPEASYAALDEMVGHAEAILQKLELPYRVVALCTGDMGFSAAKTFDLEVWLPAQNTYREISSCSNTESFQARRMQARFRNAQGKPELVHTLNGSGLAVGRTLVAVLENYQNADGSVTVPVALRPYMGGVERIDAPSSAA</sequence>
<comment type="function">
    <text evidence="1">Catalyzes the attachment of serine to tRNA(Ser). Is also able to aminoacylate tRNA(Sec) with serine, to form the misacylated tRNA L-seryl-tRNA(Sec), which will be further converted into selenocysteinyl-tRNA(Sec).</text>
</comment>
<comment type="catalytic activity">
    <reaction evidence="1">
        <text>tRNA(Ser) + L-serine + ATP = L-seryl-tRNA(Ser) + AMP + diphosphate + H(+)</text>
        <dbReference type="Rhea" id="RHEA:12292"/>
        <dbReference type="Rhea" id="RHEA-COMP:9669"/>
        <dbReference type="Rhea" id="RHEA-COMP:9703"/>
        <dbReference type="ChEBI" id="CHEBI:15378"/>
        <dbReference type="ChEBI" id="CHEBI:30616"/>
        <dbReference type="ChEBI" id="CHEBI:33019"/>
        <dbReference type="ChEBI" id="CHEBI:33384"/>
        <dbReference type="ChEBI" id="CHEBI:78442"/>
        <dbReference type="ChEBI" id="CHEBI:78533"/>
        <dbReference type="ChEBI" id="CHEBI:456215"/>
        <dbReference type="EC" id="6.1.1.11"/>
    </reaction>
</comment>
<comment type="catalytic activity">
    <reaction evidence="1">
        <text>tRNA(Sec) + L-serine + ATP = L-seryl-tRNA(Sec) + AMP + diphosphate + H(+)</text>
        <dbReference type="Rhea" id="RHEA:42580"/>
        <dbReference type="Rhea" id="RHEA-COMP:9742"/>
        <dbReference type="Rhea" id="RHEA-COMP:10128"/>
        <dbReference type="ChEBI" id="CHEBI:15378"/>
        <dbReference type="ChEBI" id="CHEBI:30616"/>
        <dbReference type="ChEBI" id="CHEBI:33019"/>
        <dbReference type="ChEBI" id="CHEBI:33384"/>
        <dbReference type="ChEBI" id="CHEBI:78442"/>
        <dbReference type="ChEBI" id="CHEBI:78533"/>
        <dbReference type="ChEBI" id="CHEBI:456215"/>
        <dbReference type="EC" id="6.1.1.11"/>
    </reaction>
</comment>
<comment type="pathway">
    <text evidence="1">Aminoacyl-tRNA biosynthesis; selenocysteinyl-tRNA(Sec) biosynthesis; L-seryl-tRNA(Sec) from L-serine and tRNA(Sec): step 1/1.</text>
</comment>
<comment type="subunit">
    <text evidence="1">Homodimer. The tRNA molecule binds across the dimer.</text>
</comment>
<comment type="subcellular location">
    <subcellularLocation>
        <location evidence="1">Cytoplasm</location>
    </subcellularLocation>
</comment>
<comment type="domain">
    <text evidence="1">Consists of two distinct domains, a catalytic core and a N-terminal extension that is involved in tRNA binding.</text>
</comment>
<comment type="similarity">
    <text evidence="1">Belongs to the class-II aminoacyl-tRNA synthetase family. Type-1 seryl-tRNA synthetase subfamily.</text>
</comment>
<organism>
    <name type="scientific">Burkholderia mallei (strain NCTC 10229)</name>
    <dbReference type="NCBI Taxonomy" id="412022"/>
    <lineage>
        <taxon>Bacteria</taxon>
        <taxon>Pseudomonadati</taxon>
        <taxon>Pseudomonadota</taxon>
        <taxon>Betaproteobacteria</taxon>
        <taxon>Burkholderiales</taxon>
        <taxon>Burkholderiaceae</taxon>
        <taxon>Burkholderia</taxon>
        <taxon>pseudomallei group</taxon>
    </lineage>
</organism>
<dbReference type="EC" id="6.1.1.11" evidence="1"/>
<dbReference type="EMBL" id="CP000546">
    <property type="protein sequence ID" value="ABN01692.1"/>
    <property type="molecule type" value="Genomic_DNA"/>
</dbReference>
<dbReference type="RefSeq" id="WP_004186129.1">
    <property type="nucleotide sequence ID" value="NC_008836.1"/>
</dbReference>
<dbReference type="SMR" id="A2S9G4"/>
<dbReference type="GeneID" id="93061177"/>
<dbReference type="KEGG" id="bml:BMA10229_A2626"/>
<dbReference type="HOGENOM" id="CLU_023797_1_1_4"/>
<dbReference type="UniPathway" id="UPA00906">
    <property type="reaction ID" value="UER00895"/>
</dbReference>
<dbReference type="Proteomes" id="UP000002283">
    <property type="component" value="Chromosome I"/>
</dbReference>
<dbReference type="GO" id="GO:0005737">
    <property type="term" value="C:cytoplasm"/>
    <property type="evidence" value="ECO:0007669"/>
    <property type="project" value="UniProtKB-SubCell"/>
</dbReference>
<dbReference type="GO" id="GO:0005524">
    <property type="term" value="F:ATP binding"/>
    <property type="evidence" value="ECO:0007669"/>
    <property type="project" value="UniProtKB-UniRule"/>
</dbReference>
<dbReference type="GO" id="GO:0004828">
    <property type="term" value="F:serine-tRNA ligase activity"/>
    <property type="evidence" value="ECO:0007669"/>
    <property type="project" value="UniProtKB-UniRule"/>
</dbReference>
<dbReference type="GO" id="GO:0016260">
    <property type="term" value="P:selenocysteine biosynthetic process"/>
    <property type="evidence" value="ECO:0007669"/>
    <property type="project" value="UniProtKB-UniRule"/>
</dbReference>
<dbReference type="GO" id="GO:0006434">
    <property type="term" value="P:seryl-tRNA aminoacylation"/>
    <property type="evidence" value="ECO:0007669"/>
    <property type="project" value="UniProtKB-UniRule"/>
</dbReference>
<dbReference type="CDD" id="cd00770">
    <property type="entry name" value="SerRS_core"/>
    <property type="match status" value="1"/>
</dbReference>
<dbReference type="Gene3D" id="3.30.930.10">
    <property type="entry name" value="Bira Bifunctional Protein, Domain 2"/>
    <property type="match status" value="1"/>
</dbReference>
<dbReference type="Gene3D" id="1.10.287.40">
    <property type="entry name" value="Serine-tRNA synthetase, tRNA binding domain"/>
    <property type="match status" value="1"/>
</dbReference>
<dbReference type="HAMAP" id="MF_00176">
    <property type="entry name" value="Ser_tRNA_synth_type1"/>
    <property type="match status" value="1"/>
</dbReference>
<dbReference type="InterPro" id="IPR002314">
    <property type="entry name" value="aa-tRNA-synt_IIb"/>
</dbReference>
<dbReference type="InterPro" id="IPR006195">
    <property type="entry name" value="aa-tRNA-synth_II"/>
</dbReference>
<dbReference type="InterPro" id="IPR045864">
    <property type="entry name" value="aa-tRNA-synth_II/BPL/LPL"/>
</dbReference>
<dbReference type="InterPro" id="IPR002317">
    <property type="entry name" value="Ser-tRNA-ligase_type_1"/>
</dbReference>
<dbReference type="InterPro" id="IPR015866">
    <property type="entry name" value="Ser-tRNA-synth_1_N"/>
</dbReference>
<dbReference type="InterPro" id="IPR042103">
    <property type="entry name" value="SerRS_1_N_sf"/>
</dbReference>
<dbReference type="InterPro" id="IPR033729">
    <property type="entry name" value="SerRS_core"/>
</dbReference>
<dbReference type="InterPro" id="IPR010978">
    <property type="entry name" value="tRNA-bd_arm"/>
</dbReference>
<dbReference type="NCBIfam" id="TIGR00414">
    <property type="entry name" value="serS"/>
    <property type="match status" value="1"/>
</dbReference>
<dbReference type="PANTHER" id="PTHR43697:SF1">
    <property type="entry name" value="SERINE--TRNA LIGASE"/>
    <property type="match status" value="1"/>
</dbReference>
<dbReference type="PANTHER" id="PTHR43697">
    <property type="entry name" value="SERYL-TRNA SYNTHETASE"/>
    <property type="match status" value="1"/>
</dbReference>
<dbReference type="Pfam" id="PF02403">
    <property type="entry name" value="Seryl_tRNA_N"/>
    <property type="match status" value="1"/>
</dbReference>
<dbReference type="Pfam" id="PF00587">
    <property type="entry name" value="tRNA-synt_2b"/>
    <property type="match status" value="1"/>
</dbReference>
<dbReference type="PIRSF" id="PIRSF001529">
    <property type="entry name" value="Ser-tRNA-synth_IIa"/>
    <property type="match status" value="1"/>
</dbReference>
<dbReference type="PRINTS" id="PR00981">
    <property type="entry name" value="TRNASYNTHSER"/>
</dbReference>
<dbReference type="SUPFAM" id="SSF55681">
    <property type="entry name" value="Class II aaRS and biotin synthetases"/>
    <property type="match status" value="1"/>
</dbReference>
<dbReference type="SUPFAM" id="SSF46589">
    <property type="entry name" value="tRNA-binding arm"/>
    <property type="match status" value="1"/>
</dbReference>
<dbReference type="PROSITE" id="PS50862">
    <property type="entry name" value="AA_TRNA_LIGASE_II"/>
    <property type="match status" value="1"/>
</dbReference>
<reference key="1">
    <citation type="journal article" date="2010" name="Genome Biol. Evol.">
        <title>Continuing evolution of Burkholderia mallei through genome reduction and large-scale rearrangements.</title>
        <authorList>
            <person name="Losada L."/>
            <person name="Ronning C.M."/>
            <person name="DeShazer D."/>
            <person name="Woods D."/>
            <person name="Fedorova N."/>
            <person name="Kim H.S."/>
            <person name="Shabalina S.A."/>
            <person name="Pearson T.R."/>
            <person name="Brinkac L."/>
            <person name="Tan P."/>
            <person name="Nandi T."/>
            <person name="Crabtree J."/>
            <person name="Badger J."/>
            <person name="Beckstrom-Sternberg S."/>
            <person name="Saqib M."/>
            <person name="Schutzer S.E."/>
            <person name="Keim P."/>
            <person name="Nierman W.C."/>
        </authorList>
    </citation>
    <scope>NUCLEOTIDE SEQUENCE [LARGE SCALE GENOMIC DNA]</scope>
    <source>
        <strain>NCTC 10229</strain>
    </source>
</reference>
<name>SYS_BURM9</name>
<keyword id="KW-0030">Aminoacyl-tRNA synthetase</keyword>
<keyword id="KW-0067">ATP-binding</keyword>
<keyword id="KW-0963">Cytoplasm</keyword>
<keyword id="KW-0436">Ligase</keyword>
<keyword id="KW-0547">Nucleotide-binding</keyword>
<keyword id="KW-0648">Protein biosynthesis</keyword>
<accession>A2S9G4</accession>